<feature type="chain" id="PRO_0000317971" description="Putative lipase ATG15">
    <location>
        <begin position="1"/>
        <end position="628"/>
    </location>
</feature>
<feature type="topological domain" description="Cytoplasmic" evidence="1">
    <location>
        <begin position="1"/>
        <end position="32"/>
    </location>
</feature>
<feature type="transmembrane region" description="Helical; Signal-anchor for type II membrane protein">
    <location>
        <begin position="33"/>
        <end position="53"/>
    </location>
</feature>
<feature type="topological domain" description="Lumenal" evidence="1">
    <location>
        <begin position="54"/>
        <end position="628"/>
    </location>
</feature>
<feature type="region of interest" description="Disordered" evidence="5">
    <location>
        <begin position="540"/>
        <end position="605"/>
    </location>
</feature>
<feature type="compositionally biased region" description="Low complexity" evidence="5">
    <location>
        <begin position="562"/>
        <end position="586"/>
    </location>
</feature>
<feature type="compositionally biased region" description="Polar residues" evidence="5">
    <location>
        <begin position="591"/>
        <end position="600"/>
    </location>
</feature>
<feature type="active site" description="Charge relay system" evidence="4">
    <location>
        <position position="401"/>
    </location>
</feature>
<feature type="glycosylation site" description="N-linked (GlcNAc...) asparagine" evidence="3">
    <location>
        <position position="261"/>
    </location>
</feature>
<feature type="glycosylation site" description="N-linked (GlcNAc...) asparagine" evidence="3">
    <location>
        <position position="299"/>
    </location>
</feature>
<feature type="glycosylation site" description="N-linked (GlcNAc...) asparagine" evidence="3">
    <location>
        <position position="383"/>
    </location>
</feature>
<feature type="glycosylation site" description="N-linked (GlcNAc...) asparagine" evidence="3">
    <location>
        <position position="518"/>
    </location>
</feature>
<gene>
    <name type="primary">ATG15</name>
    <name type="ORF">PICST_89908</name>
</gene>
<proteinExistence type="inferred from homology"/>
<name>ATG15_PICST</name>
<accession>A3LV34</accession>
<keyword id="KW-0072">Autophagy</keyword>
<keyword id="KW-0967">Endosome</keyword>
<keyword id="KW-0325">Glycoprotein</keyword>
<keyword id="KW-0378">Hydrolase</keyword>
<keyword id="KW-0442">Lipid degradation</keyword>
<keyword id="KW-0443">Lipid metabolism</keyword>
<keyword id="KW-0472">Membrane</keyword>
<keyword id="KW-1185">Reference proteome</keyword>
<keyword id="KW-0735">Signal-anchor</keyword>
<keyword id="KW-0812">Transmembrane</keyword>
<keyword id="KW-1133">Transmembrane helix</keyword>
<protein>
    <recommendedName>
        <fullName>Putative lipase ATG15</fullName>
        <ecNumber>3.1.1.3</ecNumber>
    </recommendedName>
    <alternativeName>
        <fullName>Autophagy-related protein 15</fullName>
    </alternativeName>
</protein>
<organism>
    <name type="scientific">Scheffersomyces stipitis (strain ATCC 58785 / CBS 6054 / NBRC 10063 / NRRL Y-11545)</name>
    <name type="common">Yeast</name>
    <name type="synonym">Pichia stipitis</name>
    <dbReference type="NCBI Taxonomy" id="322104"/>
    <lineage>
        <taxon>Eukaryota</taxon>
        <taxon>Fungi</taxon>
        <taxon>Dikarya</taxon>
        <taxon>Ascomycota</taxon>
        <taxon>Saccharomycotina</taxon>
        <taxon>Pichiomycetes</taxon>
        <taxon>Debaryomycetaceae</taxon>
        <taxon>Scheffersomyces</taxon>
    </lineage>
</organism>
<dbReference type="EC" id="3.1.1.3"/>
<dbReference type="EMBL" id="CP000499">
    <property type="protein sequence ID" value="ABN67059.2"/>
    <property type="molecule type" value="Genomic_DNA"/>
</dbReference>
<dbReference type="RefSeq" id="XP_001385088.2">
    <property type="nucleotide sequence ID" value="XM_001385051.1"/>
</dbReference>
<dbReference type="FunCoup" id="A3LV34">
    <property type="interactions" value="68"/>
</dbReference>
<dbReference type="STRING" id="322104.A3LV34"/>
<dbReference type="ESTHER" id="picst-atg15">
    <property type="family name" value="ATG15-related-lipase"/>
</dbReference>
<dbReference type="GlyCosmos" id="A3LV34">
    <property type="glycosylation" value="4 sites, No reported glycans"/>
</dbReference>
<dbReference type="GeneID" id="4839141"/>
<dbReference type="KEGG" id="pic:PICST_89908"/>
<dbReference type="eggNOG" id="KOG4540">
    <property type="taxonomic scope" value="Eukaryota"/>
</dbReference>
<dbReference type="HOGENOM" id="CLU_028295_0_2_1"/>
<dbReference type="InParanoid" id="A3LV34"/>
<dbReference type="OMA" id="TYHFGHT"/>
<dbReference type="OrthoDB" id="58570at2759"/>
<dbReference type="Proteomes" id="UP000002258">
    <property type="component" value="Chromosome 5"/>
</dbReference>
<dbReference type="GO" id="GO:0032585">
    <property type="term" value="C:multivesicular body membrane"/>
    <property type="evidence" value="ECO:0007669"/>
    <property type="project" value="UniProtKB-SubCell"/>
</dbReference>
<dbReference type="GO" id="GO:0005775">
    <property type="term" value="C:vacuolar lumen"/>
    <property type="evidence" value="ECO:0007669"/>
    <property type="project" value="TreeGrafter"/>
</dbReference>
<dbReference type="GO" id="GO:0004620">
    <property type="term" value="F:phospholipase activity"/>
    <property type="evidence" value="ECO:0007669"/>
    <property type="project" value="TreeGrafter"/>
</dbReference>
<dbReference type="GO" id="GO:0004806">
    <property type="term" value="F:triacylglycerol lipase activity"/>
    <property type="evidence" value="ECO:0007669"/>
    <property type="project" value="UniProtKB-EC"/>
</dbReference>
<dbReference type="GO" id="GO:0034496">
    <property type="term" value="P:multivesicular body membrane disassembly"/>
    <property type="evidence" value="ECO:0007669"/>
    <property type="project" value="TreeGrafter"/>
</dbReference>
<dbReference type="GO" id="GO:0046461">
    <property type="term" value="P:neutral lipid catabolic process"/>
    <property type="evidence" value="ECO:0007669"/>
    <property type="project" value="TreeGrafter"/>
</dbReference>
<dbReference type="GO" id="GO:0006660">
    <property type="term" value="P:phosphatidylserine catabolic process"/>
    <property type="evidence" value="ECO:0007669"/>
    <property type="project" value="TreeGrafter"/>
</dbReference>
<dbReference type="GO" id="GO:0034727">
    <property type="term" value="P:piecemeal microautophagy of the nucleus"/>
    <property type="evidence" value="ECO:0007669"/>
    <property type="project" value="TreeGrafter"/>
</dbReference>
<dbReference type="CDD" id="cd00519">
    <property type="entry name" value="Lipase_3"/>
    <property type="match status" value="1"/>
</dbReference>
<dbReference type="Gene3D" id="3.40.50.1820">
    <property type="entry name" value="alpha/beta hydrolase"/>
    <property type="match status" value="1"/>
</dbReference>
<dbReference type="InterPro" id="IPR029058">
    <property type="entry name" value="AB_hydrolase_fold"/>
</dbReference>
<dbReference type="InterPro" id="IPR050805">
    <property type="entry name" value="ATG15_Lipase"/>
</dbReference>
<dbReference type="InterPro" id="IPR002921">
    <property type="entry name" value="Fungal_lipase-type"/>
</dbReference>
<dbReference type="PANTHER" id="PTHR47175">
    <property type="entry name" value="LIPASE ATG15-RELATED"/>
    <property type="match status" value="1"/>
</dbReference>
<dbReference type="PANTHER" id="PTHR47175:SF2">
    <property type="entry name" value="LIPASE ATG15-RELATED"/>
    <property type="match status" value="1"/>
</dbReference>
<dbReference type="Pfam" id="PF01764">
    <property type="entry name" value="Lipase_3"/>
    <property type="match status" value="1"/>
</dbReference>
<dbReference type="SUPFAM" id="SSF53474">
    <property type="entry name" value="alpha/beta-Hydrolases"/>
    <property type="match status" value="1"/>
</dbReference>
<dbReference type="PROSITE" id="PS00120">
    <property type="entry name" value="LIPASE_SER"/>
    <property type="match status" value="1"/>
</dbReference>
<reference key="1">
    <citation type="journal article" date="2007" name="Nat. Biotechnol.">
        <title>Genome sequence of the lignocellulose-bioconverting and xylose-fermenting yeast Pichia stipitis.</title>
        <authorList>
            <person name="Jeffries T.W."/>
            <person name="Grigoriev I.V."/>
            <person name="Grimwood J."/>
            <person name="Laplaza J.M."/>
            <person name="Aerts A."/>
            <person name="Salamov A."/>
            <person name="Schmutz J."/>
            <person name="Lindquist E."/>
            <person name="Dehal P."/>
            <person name="Shapiro H."/>
            <person name="Jin Y.-S."/>
            <person name="Passoth V."/>
            <person name="Richardson P.M."/>
        </authorList>
    </citation>
    <scope>NUCLEOTIDE SEQUENCE [LARGE SCALE GENOMIC DNA]</scope>
    <source>
        <strain>ATCC 58785 / CBS 6054 / NBRC 10063 / NRRL Y-11545</strain>
    </source>
</reference>
<comment type="function">
    <text evidence="1">Lipase which is essential for lysis of subvacuolar cytoplasm to vacuole targeted bodies and intravacuolar autophagic bodies. Involved in the lysis of intravacuolar multivesicular body (MVB) vesicles. The intravacuolar membrane disintegration by ATG15 is critical to life span extension (By similarity).</text>
</comment>
<comment type="catalytic activity">
    <reaction>
        <text>a triacylglycerol + H2O = a diacylglycerol + a fatty acid + H(+)</text>
        <dbReference type="Rhea" id="RHEA:12044"/>
        <dbReference type="ChEBI" id="CHEBI:15377"/>
        <dbReference type="ChEBI" id="CHEBI:15378"/>
        <dbReference type="ChEBI" id="CHEBI:17855"/>
        <dbReference type="ChEBI" id="CHEBI:18035"/>
        <dbReference type="ChEBI" id="CHEBI:28868"/>
        <dbReference type="EC" id="3.1.1.3"/>
    </reaction>
</comment>
<comment type="subunit">
    <text evidence="1">Binds to both phosphatidylinositol (PI) and phosphatidylinositol 3,5-bisphosphate (PIP2).</text>
</comment>
<comment type="subcellular location">
    <subcellularLocation>
        <location evidence="2">Endosome</location>
        <location evidence="2">Multivesicular body membrane</location>
        <topology evidence="2">Single-pass type II membrane protein</topology>
    </subcellularLocation>
    <subcellularLocation>
        <location evidence="2">Prevacuolar compartment membrane</location>
        <topology evidence="2">Single-pass type II membrane protein</topology>
    </subcellularLocation>
    <text evidence="2">From ER, targeted to vacuolar lumen at the MVB vesicles via the Golgi and the prevacuolar compartment (PVC).</text>
</comment>
<comment type="similarity">
    <text evidence="6">Belongs to the AB hydrolase superfamily. Lipase family.</text>
</comment>
<sequence length="628" mass="70605">MLAAEKRRLLHKTRPVSASEKPGSIYPQRALYLLVCFSIATISLGYLHFIGAIDIGRFGISSVISDLTKQDAVSEPFSLHKEQTSSVHTESDEQTFELKHIFHHGTGPENYRLHRRLDITPSYLAKHSSYFADFSQRLAQKRDDSSVDSENLEDIYNLMDWPDVHKHKNPFTIQLPIKKDHKKGKVVRLKDRHEPGFLDSYLSYALQVKGDPKILNRIALEWEDEIEIDIPNMKDKDTLVSLATISSNAYVKFPKDENEKNKSDWIDVGQWEPDQENVDLNFGWEDIGLRGHVFVSKDNKTVVIGIKGTSGAGLPGGGSDETAGNDKDNDNLLFSCCCARVGYMWTTVCNCYEKTYTCNQDCLEKELLREDKYYQAVLDLYRNVSAIYPPETTNVWVTGHSLGGALASLLGRTYGLPVVAFEAPGEMLATKRLHLPQPPGIPKFMENIWHVGNTADPIYMGVCNGASSTCNVAGYAMETACHTGYQCVYDVVTDLGWRVNLLNHRIHTVIDDIILAYNDTAQCIEQPPCRDCFNWRFTSHDDDVPDEPEMPNPLRPKPKPKPSSSTSDGKNNRISSTATTTISPTSRKADPTSSDISEPSESPKKCLERTWYGWCSKWGYDGDVDDDQ</sequence>
<evidence type="ECO:0000250" key="1"/>
<evidence type="ECO:0000250" key="2">
    <source>
        <dbReference type="UniProtKB" id="P25641"/>
    </source>
</evidence>
<evidence type="ECO:0000255" key="3"/>
<evidence type="ECO:0000255" key="4">
    <source>
        <dbReference type="PROSITE-ProRule" id="PRU10037"/>
    </source>
</evidence>
<evidence type="ECO:0000256" key="5">
    <source>
        <dbReference type="SAM" id="MobiDB-lite"/>
    </source>
</evidence>
<evidence type="ECO:0000305" key="6"/>